<feature type="chain" id="PRO_1000099957" description="Pantothenate kinase">
    <location>
        <begin position="1"/>
        <end position="306"/>
    </location>
</feature>
<feature type="binding site" evidence="1">
    <location>
        <begin position="91"/>
        <end position="98"/>
    </location>
    <ligand>
        <name>ATP</name>
        <dbReference type="ChEBI" id="CHEBI:30616"/>
    </ligand>
</feature>
<protein>
    <recommendedName>
        <fullName evidence="1">Pantothenate kinase</fullName>
        <ecNumber evidence="1">2.7.1.33</ecNumber>
    </recommendedName>
    <alternativeName>
        <fullName evidence="1">Pantothenic acid kinase</fullName>
    </alternativeName>
</protein>
<organism>
    <name type="scientific">Streptococcus pneumoniae (strain Hungary19A-6)</name>
    <dbReference type="NCBI Taxonomy" id="487214"/>
    <lineage>
        <taxon>Bacteria</taxon>
        <taxon>Bacillati</taxon>
        <taxon>Bacillota</taxon>
        <taxon>Bacilli</taxon>
        <taxon>Lactobacillales</taxon>
        <taxon>Streptococcaceae</taxon>
        <taxon>Streptococcus</taxon>
    </lineage>
</organism>
<proteinExistence type="inferred from homology"/>
<name>COAA_STRPI</name>
<gene>
    <name evidence="1" type="primary">coaA</name>
    <name type="ordered locus">SPH_0937</name>
</gene>
<sequence>MTNEFLHFEKISRQTWQSLHRKTTPPLTEEELESIKSFNDQISLQDVTDIYLPLAHLIQIYKRTKEDLAFSKGIFLQRESKSQPFIIGVSGSVAVGKSTTSRLLQILLSRTFTDATVELVTTDGFLYPNQTLIEQGILNRKGFPESYDMEALLNFLDRIKNGQDVDIPVYSHEVYDIVPEEKQSVKAADFVIVEGINVFQNPQNDRLYITDFFDFSIYVDAGVDDIESWYLDRFLKMLSLAQNDPDSYYYRFTQMPIGEVEAFAHQVWISINLTNLQNYIEPTRNRAEVILHKSKNHEIDEIYLKK</sequence>
<evidence type="ECO:0000255" key="1">
    <source>
        <dbReference type="HAMAP-Rule" id="MF_00215"/>
    </source>
</evidence>
<reference key="1">
    <citation type="journal article" date="2010" name="Genome Biol.">
        <title>Structure and dynamics of the pan-genome of Streptococcus pneumoniae and closely related species.</title>
        <authorList>
            <person name="Donati C."/>
            <person name="Hiller N.L."/>
            <person name="Tettelin H."/>
            <person name="Muzzi A."/>
            <person name="Croucher N.J."/>
            <person name="Angiuoli S.V."/>
            <person name="Oggioni M."/>
            <person name="Dunning Hotopp J.C."/>
            <person name="Hu F.Z."/>
            <person name="Riley D.R."/>
            <person name="Covacci A."/>
            <person name="Mitchell T.J."/>
            <person name="Bentley S.D."/>
            <person name="Kilian M."/>
            <person name="Ehrlich G.D."/>
            <person name="Rappuoli R."/>
            <person name="Moxon E.R."/>
            <person name="Masignani V."/>
        </authorList>
    </citation>
    <scope>NUCLEOTIDE SEQUENCE [LARGE SCALE GENOMIC DNA]</scope>
    <source>
        <strain>Hungary19A-6</strain>
    </source>
</reference>
<accession>B1IB08</accession>
<comment type="catalytic activity">
    <reaction evidence="1">
        <text>(R)-pantothenate + ATP = (R)-4'-phosphopantothenate + ADP + H(+)</text>
        <dbReference type="Rhea" id="RHEA:16373"/>
        <dbReference type="ChEBI" id="CHEBI:10986"/>
        <dbReference type="ChEBI" id="CHEBI:15378"/>
        <dbReference type="ChEBI" id="CHEBI:29032"/>
        <dbReference type="ChEBI" id="CHEBI:30616"/>
        <dbReference type="ChEBI" id="CHEBI:456216"/>
        <dbReference type="EC" id="2.7.1.33"/>
    </reaction>
</comment>
<comment type="pathway">
    <text evidence="1">Cofactor biosynthesis; coenzyme A biosynthesis; CoA from (R)-pantothenate: step 1/5.</text>
</comment>
<comment type="subcellular location">
    <subcellularLocation>
        <location evidence="1">Cytoplasm</location>
    </subcellularLocation>
</comment>
<comment type="similarity">
    <text evidence="1">Belongs to the prokaryotic pantothenate kinase family.</text>
</comment>
<dbReference type="EC" id="2.7.1.33" evidence="1"/>
<dbReference type="EMBL" id="CP000936">
    <property type="protein sequence ID" value="ACA35822.1"/>
    <property type="molecule type" value="Genomic_DNA"/>
</dbReference>
<dbReference type="RefSeq" id="WP_000180483.1">
    <property type="nucleotide sequence ID" value="NC_010380.1"/>
</dbReference>
<dbReference type="SMR" id="B1IB08"/>
<dbReference type="KEGG" id="spv:SPH_0937"/>
<dbReference type="HOGENOM" id="CLU_053818_1_1_9"/>
<dbReference type="UniPathway" id="UPA00241">
    <property type="reaction ID" value="UER00352"/>
</dbReference>
<dbReference type="Proteomes" id="UP000002163">
    <property type="component" value="Chromosome"/>
</dbReference>
<dbReference type="GO" id="GO:0005737">
    <property type="term" value="C:cytoplasm"/>
    <property type="evidence" value="ECO:0007669"/>
    <property type="project" value="UniProtKB-SubCell"/>
</dbReference>
<dbReference type="GO" id="GO:0005524">
    <property type="term" value="F:ATP binding"/>
    <property type="evidence" value="ECO:0007669"/>
    <property type="project" value="UniProtKB-UniRule"/>
</dbReference>
<dbReference type="GO" id="GO:0004594">
    <property type="term" value="F:pantothenate kinase activity"/>
    <property type="evidence" value="ECO:0007669"/>
    <property type="project" value="UniProtKB-UniRule"/>
</dbReference>
<dbReference type="GO" id="GO:0015937">
    <property type="term" value="P:coenzyme A biosynthetic process"/>
    <property type="evidence" value="ECO:0007669"/>
    <property type="project" value="UniProtKB-UniRule"/>
</dbReference>
<dbReference type="CDD" id="cd02025">
    <property type="entry name" value="PanK"/>
    <property type="match status" value="1"/>
</dbReference>
<dbReference type="FunFam" id="3.40.50.300:FF:001646">
    <property type="entry name" value="Pantothenate kinase"/>
    <property type="match status" value="1"/>
</dbReference>
<dbReference type="Gene3D" id="3.40.50.300">
    <property type="entry name" value="P-loop containing nucleotide triphosphate hydrolases"/>
    <property type="match status" value="1"/>
</dbReference>
<dbReference type="HAMAP" id="MF_00215">
    <property type="entry name" value="Pantothen_kinase_1"/>
    <property type="match status" value="1"/>
</dbReference>
<dbReference type="InterPro" id="IPR027417">
    <property type="entry name" value="P-loop_NTPase"/>
</dbReference>
<dbReference type="InterPro" id="IPR004566">
    <property type="entry name" value="PanK"/>
</dbReference>
<dbReference type="InterPro" id="IPR006083">
    <property type="entry name" value="PRK/URK"/>
</dbReference>
<dbReference type="NCBIfam" id="TIGR00554">
    <property type="entry name" value="panK_bact"/>
    <property type="match status" value="1"/>
</dbReference>
<dbReference type="PANTHER" id="PTHR10285">
    <property type="entry name" value="URIDINE KINASE"/>
    <property type="match status" value="1"/>
</dbReference>
<dbReference type="Pfam" id="PF00485">
    <property type="entry name" value="PRK"/>
    <property type="match status" value="1"/>
</dbReference>
<dbReference type="PIRSF" id="PIRSF000545">
    <property type="entry name" value="Pantothenate_kin"/>
    <property type="match status" value="1"/>
</dbReference>
<dbReference type="SUPFAM" id="SSF52540">
    <property type="entry name" value="P-loop containing nucleoside triphosphate hydrolases"/>
    <property type="match status" value="1"/>
</dbReference>
<keyword id="KW-0067">ATP-binding</keyword>
<keyword id="KW-0173">Coenzyme A biosynthesis</keyword>
<keyword id="KW-0963">Cytoplasm</keyword>
<keyword id="KW-0418">Kinase</keyword>
<keyword id="KW-0547">Nucleotide-binding</keyword>
<keyword id="KW-0808">Transferase</keyword>